<keyword id="KW-0009">Actin-binding</keyword>
<keyword id="KW-0966">Cell projection</keyword>
<keyword id="KW-0963">Cytoplasm</keyword>
<keyword id="KW-0968">Cytoplasmic vesicle</keyword>
<keyword id="KW-0206">Cytoskeleton</keyword>
<keyword id="KW-0903">Direct protein sequencing</keyword>
<keyword id="KW-1185">Reference proteome</keyword>
<proteinExistence type="evidence at protein level"/>
<gene>
    <name evidence="6" type="ORF">EHI_176140</name>
</gene>
<feature type="chain" id="PRO_0000199598" description="Profilin-1">
    <location>
        <begin position="1"/>
        <end position="130"/>
    </location>
</feature>
<sequence length="130" mass="13237">MSWQSYVDSFLVGAGKGMGGAIIGLQGGVWAASANCTPSAQESVAIGTACASNIAGLQQTGVVIGGKKYMITRVDADEGTAMGKKGAEGISIYKTKQAVIIGYFSDASVSAGQNSDATYKCAKYLMDAGY</sequence>
<accession>P49230</accession>
<accession>C4MB21</accession>
<organism evidence="6">
    <name type="scientific">Entamoeba histolytica (strain ATCC 30459 / HM-1:IMSS / ABRM)</name>
    <dbReference type="NCBI Taxonomy" id="294381"/>
    <lineage>
        <taxon>Eukaryota</taxon>
        <taxon>Amoebozoa</taxon>
        <taxon>Evosea</taxon>
        <taxon>Archamoebae</taxon>
        <taxon>Mastigamoebida</taxon>
        <taxon>Entamoebidae</taxon>
        <taxon>Entamoeba</taxon>
    </lineage>
</organism>
<name>PROF1_ENTH1</name>
<protein>
    <recommendedName>
        <fullName evidence="3">Profilin-1</fullName>
    </recommendedName>
</protein>
<evidence type="ECO:0000269" key="1">
    <source>
    </source>
</evidence>
<evidence type="ECO:0000269" key="2">
    <source>
    </source>
</evidence>
<evidence type="ECO:0000303" key="3">
    <source>
    </source>
</evidence>
<evidence type="ECO:0000305" key="4"/>
<evidence type="ECO:0000312" key="5">
    <source>
        <dbReference type="EMBL" id="CAA62418.1"/>
    </source>
</evidence>
<evidence type="ECO:0000312" key="6">
    <source>
        <dbReference type="EMBL" id="EAL46222.1"/>
    </source>
</evidence>
<comment type="function">
    <text>Binds to actin and affects the structure of the cytoskeleton. At high concentrations, profilin prevents the polymerization of actin, whereas it enhances it at low concentrations. By binding to PIP2, it inhibits the formation of IP3 and DG.</text>
</comment>
<comment type="subunit">
    <text evidence="1 2">Interacts with actin (PubMed:8521867). Interacts with RHO1 (GTP-bound form) (PubMed:29663616).</text>
</comment>
<comment type="subcellular location">
    <subcellularLocation>
        <location evidence="1">Cytoplasm</location>
        <location evidence="1">Cytoskeleton</location>
    </subcellularLocation>
    <subcellularLocation>
        <location evidence="1">Cell projection</location>
        <location evidence="1">Phagocytic cup</location>
    </subcellularLocation>
    <subcellularLocation>
        <location evidence="1">Cytoplasmic vesicle</location>
        <location evidence="1">Phagosome</location>
    </subcellularLocation>
    <text evidence="1">Localizes to phagocytic cups and to phagosomes after their separation from the cell membrane.</text>
</comment>
<comment type="developmental stage">
    <text evidence="1">Expressed in trophozoites (at protein level).</text>
</comment>
<comment type="similarity">
    <text evidence="4">Belongs to the profilin family.</text>
</comment>
<reference evidence="5" key="1">
    <citation type="journal article" date="1995" name="Eur. J. Biochem.">
        <title>The basic isoform of profilin in pathogenic Entamoeba histolytica. cDNA cloning, heterologous expression, and actin-binding properties.</title>
        <authorList>
            <person name="Binder M."/>
            <person name="Ortner S."/>
            <person name="Erben H."/>
            <person name="Scheiner O."/>
            <person name="Wiedermann G."/>
            <person name="Valenta R."/>
            <person name="Duchene M."/>
        </authorList>
    </citation>
    <scope>NUCLEOTIDE SEQUENCE [MRNA]</scope>
    <scope>PROTEIN SEQUENCE OF 74-84 AND 86-94</scope>
    <scope>INTERACTION WITH ACTIN</scope>
    <source>
        <strain evidence="5">SFL-3</strain>
    </source>
</reference>
<reference evidence="6" key="2">
    <citation type="journal article" date="2005" name="Nature">
        <title>The genome of the protist parasite Entamoeba histolytica.</title>
        <authorList>
            <person name="Loftus B.J."/>
            <person name="Anderson I."/>
            <person name="Davies R."/>
            <person name="Alsmark U.C."/>
            <person name="Samuelson J."/>
            <person name="Amedeo P."/>
            <person name="Roncaglia P."/>
            <person name="Berriman M."/>
            <person name="Hirt R.P."/>
            <person name="Mann B.J."/>
            <person name="Nozaki T."/>
            <person name="Suh B."/>
            <person name="Pop M."/>
            <person name="Duchene M."/>
            <person name="Ackers J."/>
            <person name="Tannich E."/>
            <person name="Leippe M."/>
            <person name="Hofer M."/>
            <person name="Bruchhaus I."/>
            <person name="Willhoeft U."/>
            <person name="Bhattacharya A."/>
            <person name="Chillingworth T."/>
            <person name="Churcher C.M."/>
            <person name="Hance Z."/>
            <person name="Harris B."/>
            <person name="Harris D."/>
            <person name="Jagels K."/>
            <person name="Moule S."/>
            <person name="Mungall K.L."/>
            <person name="Ormond D."/>
            <person name="Squares R."/>
            <person name="Whitehead S."/>
            <person name="Quail M.A."/>
            <person name="Rabbinowitsch E."/>
            <person name="Norbertczak H."/>
            <person name="Price C."/>
            <person name="Wang Z."/>
            <person name="Guillen N."/>
            <person name="Gilchrist C."/>
            <person name="Stroup S.E."/>
            <person name="Bhattacharya S."/>
            <person name="Lohia A."/>
            <person name="Foster P.G."/>
            <person name="Sicheritz-Ponten T."/>
            <person name="Weber C."/>
            <person name="Singh U."/>
            <person name="Mukherjee C."/>
            <person name="El-Sayed N.M.A."/>
            <person name="Petri W.A."/>
            <person name="Clark C.G."/>
            <person name="Embley T.M."/>
            <person name="Barrell B.G."/>
            <person name="Fraser C.M."/>
            <person name="Hall N."/>
        </authorList>
    </citation>
    <scope>NUCLEOTIDE SEQUENCE [LARGE SCALE GENOMIC DNA]</scope>
    <source>
        <strain evidence="6">ATCC 30459 / HM-1:IMSS / ABRM</strain>
    </source>
</reference>
<reference key="3">
    <citation type="journal article" date="2018" name="Cell. Microbiol.">
        <title>EhRho1 regulates phagocytosis by modulating actin dynamics through EhFormin1 and EhProfilin1 in Entamoeba histolytica.</title>
        <authorList>
            <person name="Bharadwaj R."/>
            <person name="Sharma S."/>
            <person name="Janhawi X."/>
            <person name="Arya R."/>
            <person name="Bhattacharya S."/>
            <person name="Bhattacharya A."/>
        </authorList>
    </citation>
    <scope>INTERACTION WITH RHO1</scope>
    <scope>SUBCELLULAR LOCATION</scope>
    <scope>DEVELOPMENTAL STAGE</scope>
</reference>
<dbReference type="EMBL" id="X90911">
    <property type="protein sequence ID" value="CAA62418.1"/>
    <property type="molecule type" value="mRNA"/>
</dbReference>
<dbReference type="EMBL" id="DS571547">
    <property type="protein sequence ID" value="EAL46222.1"/>
    <property type="molecule type" value="Genomic_DNA"/>
</dbReference>
<dbReference type="PIR" id="S63533">
    <property type="entry name" value="S63533"/>
</dbReference>
<dbReference type="RefSeq" id="XP_651608.1">
    <property type="nucleotide sequence ID" value="XM_646516.1"/>
</dbReference>
<dbReference type="SMR" id="P49230"/>
<dbReference type="STRING" id="5759.C4MB21"/>
<dbReference type="EnsemblProtists" id="rna_EHI_176140-1">
    <property type="protein sequence ID" value="rna_EHI_176140-1"/>
    <property type="gene ID" value="EHI_176140"/>
</dbReference>
<dbReference type="GeneID" id="3405916"/>
<dbReference type="KEGG" id="ehi:EHI_176140"/>
<dbReference type="VEuPathDB" id="AmoebaDB:EHI5A_101680"/>
<dbReference type="VEuPathDB" id="AmoebaDB:EHI7A_063630"/>
<dbReference type="VEuPathDB" id="AmoebaDB:EHI8A_066600"/>
<dbReference type="VEuPathDB" id="AmoebaDB:EHI_176140"/>
<dbReference type="VEuPathDB" id="AmoebaDB:KM1_121210"/>
<dbReference type="eggNOG" id="KOG1755">
    <property type="taxonomic scope" value="Eukaryota"/>
</dbReference>
<dbReference type="HOGENOM" id="CLU_120772_1_1_1"/>
<dbReference type="OMA" id="QGQKFML"/>
<dbReference type="OrthoDB" id="29346at2759"/>
<dbReference type="Proteomes" id="UP000001926">
    <property type="component" value="Partially assembled WGS sequence"/>
</dbReference>
<dbReference type="GO" id="GO:0015629">
    <property type="term" value="C:actin cytoskeleton"/>
    <property type="evidence" value="ECO:0000314"/>
    <property type="project" value="UniProtKB"/>
</dbReference>
<dbReference type="GO" id="GO:0005938">
    <property type="term" value="C:cell cortex"/>
    <property type="evidence" value="ECO:0000318"/>
    <property type="project" value="GO_Central"/>
</dbReference>
<dbReference type="GO" id="GO:0042995">
    <property type="term" value="C:cell projection"/>
    <property type="evidence" value="ECO:0007669"/>
    <property type="project" value="UniProtKB-KW"/>
</dbReference>
<dbReference type="GO" id="GO:0001891">
    <property type="term" value="C:phagocytic cup"/>
    <property type="evidence" value="ECO:0000314"/>
    <property type="project" value="UniProtKB"/>
</dbReference>
<dbReference type="GO" id="GO:0045335">
    <property type="term" value="C:phagocytic vesicle"/>
    <property type="evidence" value="ECO:0000314"/>
    <property type="project" value="UniProtKB"/>
</dbReference>
<dbReference type="GO" id="GO:0003785">
    <property type="term" value="F:actin monomer binding"/>
    <property type="evidence" value="ECO:0000318"/>
    <property type="project" value="GO_Central"/>
</dbReference>
<dbReference type="CDD" id="cd00148">
    <property type="entry name" value="PROF"/>
    <property type="match status" value="1"/>
</dbReference>
<dbReference type="FunFam" id="3.30.450.30:FF:000028">
    <property type="entry name" value="Profilin"/>
    <property type="match status" value="1"/>
</dbReference>
<dbReference type="Gene3D" id="3.30.450.30">
    <property type="entry name" value="Dynein light chain 2a, cytoplasmic"/>
    <property type="match status" value="1"/>
</dbReference>
<dbReference type="InterPro" id="IPR048278">
    <property type="entry name" value="PFN"/>
</dbReference>
<dbReference type="InterPro" id="IPR005455">
    <property type="entry name" value="PFN_euk"/>
</dbReference>
<dbReference type="InterPro" id="IPR036140">
    <property type="entry name" value="PFN_sf"/>
</dbReference>
<dbReference type="InterPro" id="IPR027310">
    <property type="entry name" value="Profilin_CS"/>
</dbReference>
<dbReference type="PANTHER" id="PTHR11604">
    <property type="entry name" value="PROFILIN"/>
    <property type="match status" value="1"/>
</dbReference>
<dbReference type="PANTHER" id="PTHR11604:SF0">
    <property type="entry name" value="PROFILIN"/>
    <property type="match status" value="1"/>
</dbReference>
<dbReference type="Pfam" id="PF00235">
    <property type="entry name" value="Profilin"/>
    <property type="match status" value="1"/>
</dbReference>
<dbReference type="PRINTS" id="PR01640">
    <property type="entry name" value="PROFILINPLNT"/>
</dbReference>
<dbReference type="SMART" id="SM00392">
    <property type="entry name" value="PROF"/>
    <property type="match status" value="1"/>
</dbReference>
<dbReference type="SUPFAM" id="SSF55770">
    <property type="entry name" value="Profilin (actin-binding protein)"/>
    <property type="match status" value="1"/>
</dbReference>
<dbReference type="PROSITE" id="PS00414">
    <property type="entry name" value="PROFILIN"/>
    <property type="match status" value="1"/>
</dbReference>